<comment type="function">
    <text evidence="1 3">Sequence-specific transcription factor which is part of a developmental regulatory system that provides cells with specific positional identities on the anterior-posterior axis (By similarity). Plays a role in early embryonic development.</text>
</comment>
<comment type="subcellular location">
    <subcellularLocation>
        <location evidence="2">Nucleus</location>
    </subcellularLocation>
</comment>
<comment type="developmental stage">
    <text evidence="3">Expressed both maternally and zygotically. Detected in every cell of early cleavage embryos through to gastrulae. From around 6 hours post-fertilization (hpf) through to early somitogenesis, expressed along the entire anterior to posterior length of the gastrula. At 19 hpf, expression is up-regulated in the developing tail bud and it becomes restricted to the tail bud by 24 hpf. By 40 hpf, expression is further restricted within the tail bud, possibly to the developing vertebrae. No expression at 72 hpf.</text>
</comment>
<comment type="disruption phenotype">
    <text evidence="3">Morpholino knockdown of the protein results in a biphasic developmental delay characterized by a reduced body size with 22-23 somites by 24 hpf; the first delay occurs before gastrulation and the second during late tail bud development.</text>
</comment>
<comment type="similarity">
    <text evidence="4">Belongs to the Abd-B homeobox family.</text>
</comment>
<name>HXCDB_DANRE</name>
<proteinExistence type="evidence at transcript level"/>
<evidence type="ECO:0000250" key="1"/>
<evidence type="ECO:0000255" key="2">
    <source>
        <dbReference type="PROSITE-ProRule" id="PRU00108"/>
    </source>
</evidence>
<evidence type="ECO:0000269" key="3">
    <source>
    </source>
</evidence>
<evidence type="ECO:0000305" key="4"/>
<keyword id="KW-0217">Developmental protein</keyword>
<keyword id="KW-0238">DNA-binding</keyword>
<keyword id="KW-0371">Homeobox</keyword>
<keyword id="KW-0539">Nucleus</keyword>
<keyword id="KW-1185">Reference proteome</keyword>
<keyword id="KW-0804">Transcription</keyword>
<keyword id="KW-0805">Transcription regulation</keyword>
<feature type="chain" id="PRO_0000200200" description="Homeobox protein Hox-C13b">
    <location>
        <begin position="1"/>
        <end position="273"/>
    </location>
</feature>
<feature type="DNA-binding region" description="Homeobox" evidence="2">
    <location>
        <begin position="201"/>
        <end position="260"/>
    </location>
</feature>
<accession>Q6JIY4</accession>
<accession>Q9YGS8</accession>
<protein>
    <recommendedName>
        <fullName>Homeobox protein Hox-C13b</fullName>
    </recommendedName>
</protein>
<organism>
    <name type="scientific">Danio rerio</name>
    <name type="common">Zebrafish</name>
    <name type="synonym">Brachydanio rerio</name>
    <dbReference type="NCBI Taxonomy" id="7955"/>
    <lineage>
        <taxon>Eukaryota</taxon>
        <taxon>Metazoa</taxon>
        <taxon>Chordata</taxon>
        <taxon>Craniata</taxon>
        <taxon>Vertebrata</taxon>
        <taxon>Euteleostomi</taxon>
        <taxon>Actinopterygii</taxon>
        <taxon>Neopterygii</taxon>
        <taxon>Teleostei</taxon>
        <taxon>Ostariophysi</taxon>
        <taxon>Cypriniformes</taxon>
        <taxon>Danionidae</taxon>
        <taxon>Danioninae</taxon>
        <taxon>Danio</taxon>
    </lineage>
</organism>
<gene>
    <name type="primary">hoxc13b</name>
</gene>
<sequence length="273" mass="30931">MEGLSGNCPASHCRDFISHPALGRHSGSLASHQGTVYPDITTQDAGRQFPAPQASSGTSLGYGYAFGSPYYGCRLSYSHNVNLQQKSYHPAEKYMETSGALPAEELSSRSKEFAIYPSFASSYQTVPGYLDVPVVPGISAHPESRHEALFPMDSYQHWALSNGWDEQLYCSKEQTHFNHLWKSQFSDVVPHQAEMNGYRRGRKKRVPYTKIQLKELEKEYAASKFITKDRRRRISATTSLSERQVTIWFQNRRVKEKKFVCKSSKSSTNMHSV</sequence>
<reference key="1">
    <citation type="journal article" date="2004" name="Dev. Biol.">
        <title>Differences in expression pattern and function between zebrafish hoxc13 orthologs: recruitment of Hoxc13b into an early embryonic role.</title>
        <authorList>
            <person name="Thummel R."/>
            <person name="Li L."/>
            <person name="Tanase C."/>
            <person name="Sarras M.P. Jr."/>
            <person name="Godwin A.R."/>
        </authorList>
    </citation>
    <scope>NUCLEOTIDE SEQUENCE [MRNA]</scope>
    <scope>FUNCTION</scope>
    <scope>DEVELOPMENTAL STAGE</scope>
    <scope>DISRUPTION PHENOTYPE</scope>
    <source>
        <tissue>Embryo</tissue>
    </source>
</reference>
<reference key="2">
    <citation type="journal article" date="1998" name="Science">
        <title>Zebrafish hox clusters and vertebrate genome evolution.</title>
        <authorList>
            <person name="Amores A."/>
            <person name="Force A."/>
            <person name="Yan Y.-L."/>
            <person name="Joly L."/>
            <person name="Amemiya C."/>
            <person name="Fritz A."/>
            <person name="Ho R.K."/>
            <person name="Langeland J."/>
            <person name="Prince V.E."/>
            <person name="Wang Y.-L."/>
            <person name="Westerfield M."/>
            <person name="Ekker M."/>
            <person name="Postlethwait J.H."/>
        </authorList>
    </citation>
    <scope>NUCLEOTIDE SEQUENCE [GENOMIC DNA] OF 201-273</scope>
</reference>
<dbReference type="EMBL" id="AY452738">
    <property type="protein sequence ID" value="AAS16938.1"/>
    <property type="molecule type" value="mRNA"/>
</dbReference>
<dbReference type="EMBL" id="AF071262">
    <property type="protein sequence ID" value="AAD15955.1"/>
    <property type="molecule type" value="Genomic_DNA"/>
</dbReference>
<dbReference type="SMR" id="Q6JIY4"/>
<dbReference type="STRING" id="7955.ENSDARP00000147440"/>
<dbReference type="PaxDb" id="7955-ENSDARP00000104963"/>
<dbReference type="Ensembl" id="ENSDART00000182896">
    <property type="protein sequence ID" value="ENSDARP00000147440"/>
    <property type="gene ID" value="ENSDARG00000113877"/>
</dbReference>
<dbReference type="AGR" id="ZFIN:ZDB-GENE-000822-5"/>
<dbReference type="ZFIN" id="ZDB-GENE-000822-5">
    <property type="gene designation" value="hoxc13b"/>
</dbReference>
<dbReference type="eggNOG" id="KOG0487">
    <property type="taxonomic scope" value="Eukaryota"/>
</dbReference>
<dbReference type="HOGENOM" id="CLU_059940_0_0_1"/>
<dbReference type="InParanoid" id="Q6JIY4"/>
<dbReference type="OMA" id="HPESRHE"/>
<dbReference type="PhylomeDB" id="Q6JIY4"/>
<dbReference type="PRO" id="PR:Q6JIY4"/>
<dbReference type="Proteomes" id="UP000000437">
    <property type="component" value="Unplaced"/>
</dbReference>
<dbReference type="Bgee" id="ENSDARG00000113877">
    <property type="expression patterns" value="Expressed in post-anal tail and 2 other cell types or tissues"/>
</dbReference>
<dbReference type="GO" id="GO:0005634">
    <property type="term" value="C:nucleus"/>
    <property type="evidence" value="ECO:0007669"/>
    <property type="project" value="UniProtKB-SubCell"/>
</dbReference>
<dbReference type="GO" id="GO:0000981">
    <property type="term" value="F:DNA-binding transcription factor activity, RNA polymerase II-specific"/>
    <property type="evidence" value="ECO:0000318"/>
    <property type="project" value="GO_Central"/>
</dbReference>
<dbReference type="GO" id="GO:0000978">
    <property type="term" value="F:RNA polymerase II cis-regulatory region sequence-specific DNA binding"/>
    <property type="evidence" value="ECO:0000318"/>
    <property type="project" value="GO_Central"/>
</dbReference>
<dbReference type="GO" id="GO:0031101">
    <property type="term" value="P:fin regeneration"/>
    <property type="evidence" value="ECO:0000315"/>
    <property type="project" value="ZFIN"/>
</dbReference>
<dbReference type="GO" id="GO:0006357">
    <property type="term" value="P:regulation of transcription by RNA polymerase II"/>
    <property type="evidence" value="ECO:0000318"/>
    <property type="project" value="GO_Central"/>
</dbReference>
<dbReference type="CDD" id="cd00086">
    <property type="entry name" value="homeodomain"/>
    <property type="match status" value="1"/>
</dbReference>
<dbReference type="FunFam" id="1.10.10.60:FF:000130">
    <property type="entry name" value="Homeobox protein Hox-D12"/>
    <property type="match status" value="1"/>
</dbReference>
<dbReference type="Gene3D" id="1.10.10.60">
    <property type="entry name" value="Homeodomain-like"/>
    <property type="match status" value="1"/>
</dbReference>
<dbReference type="InterPro" id="IPR051003">
    <property type="entry name" value="AP_axis_regulatory_Homeobox"/>
</dbReference>
<dbReference type="InterPro" id="IPR001356">
    <property type="entry name" value="HD"/>
</dbReference>
<dbReference type="InterPro" id="IPR017970">
    <property type="entry name" value="Homeobox_CS"/>
</dbReference>
<dbReference type="InterPro" id="IPR009057">
    <property type="entry name" value="Homeodomain-like_sf"/>
</dbReference>
<dbReference type="InterPro" id="IPR022067">
    <property type="entry name" value="HoxA13_N"/>
</dbReference>
<dbReference type="PANTHER" id="PTHR45804:SF5">
    <property type="entry name" value="HOMEOBOX PROTEIN HOX-C13"/>
    <property type="match status" value="1"/>
</dbReference>
<dbReference type="PANTHER" id="PTHR45804">
    <property type="entry name" value="SEGMENTATION PROTEIN FUSHI TARAZU-LIKE PROTEIN"/>
    <property type="match status" value="1"/>
</dbReference>
<dbReference type="Pfam" id="PF00046">
    <property type="entry name" value="Homeodomain"/>
    <property type="match status" value="1"/>
</dbReference>
<dbReference type="Pfam" id="PF12284">
    <property type="entry name" value="HoxA13_N"/>
    <property type="match status" value="1"/>
</dbReference>
<dbReference type="SMART" id="SM00389">
    <property type="entry name" value="HOX"/>
    <property type="match status" value="1"/>
</dbReference>
<dbReference type="SUPFAM" id="SSF46689">
    <property type="entry name" value="Homeodomain-like"/>
    <property type="match status" value="1"/>
</dbReference>
<dbReference type="PROSITE" id="PS00027">
    <property type="entry name" value="HOMEOBOX_1"/>
    <property type="match status" value="1"/>
</dbReference>
<dbReference type="PROSITE" id="PS50071">
    <property type="entry name" value="HOMEOBOX_2"/>
    <property type="match status" value="1"/>
</dbReference>